<organism>
    <name type="scientific">Maridesulfovibrio salexigens (strain ATCC 14822 / DSM 2638 / NCIMB 8403 / VKM B-1763)</name>
    <name type="common">Desulfovibrio salexigens</name>
    <dbReference type="NCBI Taxonomy" id="526222"/>
    <lineage>
        <taxon>Bacteria</taxon>
        <taxon>Pseudomonadati</taxon>
        <taxon>Thermodesulfobacteriota</taxon>
        <taxon>Desulfovibrionia</taxon>
        <taxon>Desulfovibrionales</taxon>
        <taxon>Desulfovibrionaceae</taxon>
        <taxon>Maridesulfovibrio</taxon>
    </lineage>
</organism>
<dbReference type="EC" id="2.7.2.3" evidence="1"/>
<dbReference type="EMBL" id="CP001649">
    <property type="protein sequence ID" value="ACS79996.1"/>
    <property type="molecule type" value="Genomic_DNA"/>
</dbReference>
<dbReference type="RefSeq" id="WP_015851812.1">
    <property type="nucleotide sequence ID" value="NC_012881.1"/>
</dbReference>
<dbReference type="SMR" id="C6BUI7"/>
<dbReference type="STRING" id="526222.Desal_1935"/>
<dbReference type="KEGG" id="dsa:Desal_1935"/>
<dbReference type="eggNOG" id="COG0126">
    <property type="taxonomic scope" value="Bacteria"/>
</dbReference>
<dbReference type="HOGENOM" id="CLU_025427_0_2_7"/>
<dbReference type="OrthoDB" id="9808460at2"/>
<dbReference type="UniPathway" id="UPA00109">
    <property type="reaction ID" value="UER00185"/>
</dbReference>
<dbReference type="Proteomes" id="UP000002601">
    <property type="component" value="Chromosome"/>
</dbReference>
<dbReference type="GO" id="GO:0005829">
    <property type="term" value="C:cytosol"/>
    <property type="evidence" value="ECO:0007669"/>
    <property type="project" value="TreeGrafter"/>
</dbReference>
<dbReference type="GO" id="GO:0043531">
    <property type="term" value="F:ADP binding"/>
    <property type="evidence" value="ECO:0007669"/>
    <property type="project" value="TreeGrafter"/>
</dbReference>
<dbReference type="GO" id="GO:0005524">
    <property type="term" value="F:ATP binding"/>
    <property type="evidence" value="ECO:0007669"/>
    <property type="project" value="UniProtKB-KW"/>
</dbReference>
<dbReference type="GO" id="GO:0004618">
    <property type="term" value="F:phosphoglycerate kinase activity"/>
    <property type="evidence" value="ECO:0007669"/>
    <property type="project" value="UniProtKB-UniRule"/>
</dbReference>
<dbReference type="GO" id="GO:0006094">
    <property type="term" value="P:gluconeogenesis"/>
    <property type="evidence" value="ECO:0007669"/>
    <property type="project" value="TreeGrafter"/>
</dbReference>
<dbReference type="GO" id="GO:0006096">
    <property type="term" value="P:glycolytic process"/>
    <property type="evidence" value="ECO:0007669"/>
    <property type="project" value="UniProtKB-UniRule"/>
</dbReference>
<dbReference type="FunFam" id="3.40.50.1260:FF:000006">
    <property type="entry name" value="Phosphoglycerate kinase"/>
    <property type="match status" value="1"/>
</dbReference>
<dbReference type="FunFam" id="3.40.50.1260:FF:000031">
    <property type="entry name" value="Phosphoglycerate kinase 1"/>
    <property type="match status" value="1"/>
</dbReference>
<dbReference type="Gene3D" id="3.40.50.1260">
    <property type="entry name" value="Phosphoglycerate kinase, N-terminal domain"/>
    <property type="match status" value="2"/>
</dbReference>
<dbReference type="HAMAP" id="MF_00145">
    <property type="entry name" value="Phosphoglyc_kinase"/>
    <property type="match status" value="1"/>
</dbReference>
<dbReference type="InterPro" id="IPR001576">
    <property type="entry name" value="Phosphoglycerate_kinase"/>
</dbReference>
<dbReference type="InterPro" id="IPR015824">
    <property type="entry name" value="Phosphoglycerate_kinase_N"/>
</dbReference>
<dbReference type="InterPro" id="IPR036043">
    <property type="entry name" value="Phosphoglycerate_kinase_sf"/>
</dbReference>
<dbReference type="PANTHER" id="PTHR11406">
    <property type="entry name" value="PHOSPHOGLYCERATE KINASE"/>
    <property type="match status" value="1"/>
</dbReference>
<dbReference type="PANTHER" id="PTHR11406:SF23">
    <property type="entry name" value="PHOSPHOGLYCERATE KINASE 1, CHLOROPLASTIC-RELATED"/>
    <property type="match status" value="1"/>
</dbReference>
<dbReference type="Pfam" id="PF00162">
    <property type="entry name" value="PGK"/>
    <property type="match status" value="1"/>
</dbReference>
<dbReference type="PIRSF" id="PIRSF000724">
    <property type="entry name" value="Pgk"/>
    <property type="match status" value="1"/>
</dbReference>
<dbReference type="PRINTS" id="PR00477">
    <property type="entry name" value="PHGLYCKINASE"/>
</dbReference>
<dbReference type="SUPFAM" id="SSF53748">
    <property type="entry name" value="Phosphoglycerate kinase"/>
    <property type="match status" value="1"/>
</dbReference>
<evidence type="ECO:0000255" key="1">
    <source>
        <dbReference type="HAMAP-Rule" id="MF_00145"/>
    </source>
</evidence>
<keyword id="KW-0067">ATP-binding</keyword>
<keyword id="KW-0963">Cytoplasm</keyword>
<keyword id="KW-0324">Glycolysis</keyword>
<keyword id="KW-0418">Kinase</keyword>
<keyword id="KW-0547">Nucleotide-binding</keyword>
<keyword id="KW-1185">Reference proteome</keyword>
<keyword id="KW-0808">Transferase</keyword>
<gene>
    <name evidence="1" type="primary">pgk</name>
    <name type="ordered locus">Desal_1935</name>
</gene>
<reference key="1">
    <citation type="submission" date="2009-06" db="EMBL/GenBank/DDBJ databases">
        <title>Complete sequence of Desulfovibrio salexigens DSM 2638.</title>
        <authorList>
            <consortium name="US DOE Joint Genome Institute"/>
            <person name="Lucas S."/>
            <person name="Copeland A."/>
            <person name="Lapidus A."/>
            <person name="Glavina del Rio T."/>
            <person name="Tice H."/>
            <person name="Bruce D."/>
            <person name="Goodwin L."/>
            <person name="Pitluck S."/>
            <person name="Munk A.C."/>
            <person name="Brettin T."/>
            <person name="Detter J.C."/>
            <person name="Han C."/>
            <person name="Tapia R."/>
            <person name="Larimer F."/>
            <person name="Land M."/>
            <person name="Hauser L."/>
            <person name="Kyrpides N."/>
            <person name="Anderson I."/>
            <person name="Wall J.D."/>
            <person name="Arkin A.P."/>
            <person name="Dehal P."/>
            <person name="Chivian D."/>
            <person name="Giles B."/>
            <person name="Hazen T.C."/>
        </authorList>
    </citation>
    <scope>NUCLEOTIDE SEQUENCE [LARGE SCALE GENOMIC DNA]</scope>
    <source>
        <strain>ATCC 14822 / DSM 2638 / NCIMB 8403 / VKM B-1763</strain>
    </source>
</reference>
<accession>C6BUI7</accession>
<feature type="chain" id="PRO_1000203332" description="Phosphoglycerate kinase">
    <location>
        <begin position="1"/>
        <end position="396"/>
    </location>
</feature>
<feature type="binding site" evidence="1">
    <location>
        <begin position="19"/>
        <end position="21"/>
    </location>
    <ligand>
        <name>substrate</name>
    </ligand>
</feature>
<feature type="binding site" evidence="1">
    <location>
        <position position="34"/>
    </location>
    <ligand>
        <name>substrate</name>
    </ligand>
</feature>
<feature type="binding site" evidence="1">
    <location>
        <begin position="57"/>
        <end position="60"/>
    </location>
    <ligand>
        <name>substrate</name>
    </ligand>
</feature>
<feature type="binding site" evidence="1">
    <location>
        <position position="116"/>
    </location>
    <ligand>
        <name>substrate</name>
    </ligand>
</feature>
<feature type="binding site" evidence="1">
    <location>
        <position position="153"/>
    </location>
    <ligand>
        <name>substrate</name>
    </ligand>
</feature>
<feature type="binding site" evidence="1">
    <location>
        <position position="204"/>
    </location>
    <ligand>
        <name>ATP</name>
        <dbReference type="ChEBI" id="CHEBI:30616"/>
    </ligand>
</feature>
<feature type="binding site" evidence="1">
    <location>
        <position position="324"/>
    </location>
    <ligand>
        <name>ATP</name>
        <dbReference type="ChEBI" id="CHEBI:30616"/>
    </ligand>
</feature>
<feature type="binding site" evidence="1">
    <location>
        <begin position="351"/>
        <end position="354"/>
    </location>
    <ligand>
        <name>ATP</name>
        <dbReference type="ChEBI" id="CHEBI:30616"/>
    </ligand>
</feature>
<name>PGK_MARSD</name>
<sequence length="396" mass="42551">MRFIDQLDIAGKKLLMRVDFNVPLDGETITDDNRIKAAVPTFKYALEKGASVIVMAHLGKPKGKRVDSLSLAPAAKRLGEYLGMEVPLAPDCIGSEVEKMAAELKPGQVMMLENLRFHAEEQAKTPEERGDFGKQLAALADIYVNDAFGVAHRANASVVDVPYAAKECCAGFLLKLEWEYLGEALKNARKPYIAVSGGAKVSSKLGILNNLIGKVDDFIIGGAMANTFLLAQGKAVGKSLVEESLVDTAKEIMDKAASSGTTLHLPTDFIWGKDIETAQGVCDGDSVPEDGMLLDIGPESAKKFCEVIERSKTIVWNGPMGLFEKEPFAQGSLKVCEVMANLDDATTIVGGGDTDAVVHQAKLEDKFTFISTGGGSFLEFLEGKELPAFKALKENS</sequence>
<protein>
    <recommendedName>
        <fullName evidence="1">Phosphoglycerate kinase</fullName>
        <ecNumber evidence="1">2.7.2.3</ecNumber>
    </recommendedName>
</protein>
<comment type="catalytic activity">
    <reaction evidence="1">
        <text>(2R)-3-phosphoglycerate + ATP = (2R)-3-phospho-glyceroyl phosphate + ADP</text>
        <dbReference type="Rhea" id="RHEA:14801"/>
        <dbReference type="ChEBI" id="CHEBI:30616"/>
        <dbReference type="ChEBI" id="CHEBI:57604"/>
        <dbReference type="ChEBI" id="CHEBI:58272"/>
        <dbReference type="ChEBI" id="CHEBI:456216"/>
        <dbReference type="EC" id="2.7.2.3"/>
    </reaction>
</comment>
<comment type="pathway">
    <text evidence="1">Carbohydrate degradation; glycolysis; pyruvate from D-glyceraldehyde 3-phosphate: step 2/5.</text>
</comment>
<comment type="subunit">
    <text evidence="1">Monomer.</text>
</comment>
<comment type="subcellular location">
    <subcellularLocation>
        <location evidence="1">Cytoplasm</location>
    </subcellularLocation>
</comment>
<comment type="similarity">
    <text evidence="1">Belongs to the phosphoglycerate kinase family.</text>
</comment>
<proteinExistence type="inferred from homology"/>